<comment type="function">
    <text evidence="1">Catalyzes the phosphorylation of pantothenate (Pan), the first step in CoA biosynthesis.</text>
</comment>
<comment type="catalytic activity">
    <reaction evidence="1">
        <text>(R)-pantothenate + ATP = (R)-4'-phosphopantothenate + ADP + H(+)</text>
        <dbReference type="Rhea" id="RHEA:16373"/>
        <dbReference type="ChEBI" id="CHEBI:10986"/>
        <dbReference type="ChEBI" id="CHEBI:15378"/>
        <dbReference type="ChEBI" id="CHEBI:29032"/>
        <dbReference type="ChEBI" id="CHEBI:30616"/>
        <dbReference type="ChEBI" id="CHEBI:456216"/>
        <dbReference type="EC" id="2.7.1.33"/>
    </reaction>
</comment>
<comment type="cofactor">
    <cofactor evidence="1">
        <name>NH4(+)</name>
        <dbReference type="ChEBI" id="CHEBI:28938"/>
    </cofactor>
    <cofactor evidence="1">
        <name>K(+)</name>
        <dbReference type="ChEBI" id="CHEBI:29103"/>
    </cofactor>
    <text evidence="1">A monovalent cation. Ammonium or potassium.</text>
</comment>
<comment type="pathway">
    <text evidence="1">Cofactor biosynthesis; coenzyme A biosynthesis; CoA from (R)-pantothenate: step 1/5.</text>
</comment>
<comment type="subunit">
    <text evidence="1">Homodimer.</text>
</comment>
<comment type="subcellular location">
    <subcellularLocation>
        <location evidence="1">Cytoplasm</location>
    </subcellularLocation>
</comment>
<comment type="similarity">
    <text evidence="1">Belongs to the type III pantothenate kinase family.</text>
</comment>
<name>COAX_XANOR</name>
<sequence length="242" mass="24805">MSEWLFDLGNSRFKYAPLHGNRAGQVQAWAHGAEAMDAAALAALPSGQIAHVASVAAPALTQRMIACLQERFTQVRIVRTAAECAGIRIAYADPSRFGVDRFLALLGARGDAPVLVAGVGTALTIDVLGADGLHHGGCIAASPTTMREALHARAVQLPASGGDYVELAIDTDDALTSGCDGAAVALIERSLQHAQRSLGAPVRLLVHGGGAPPLLPLLPGATFRAALVLDGLATWATAAASP</sequence>
<protein>
    <recommendedName>
        <fullName evidence="1">Type III pantothenate kinase</fullName>
        <ecNumber evidence="1">2.7.1.33</ecNumber>
    </recommendedName>
    <alternativeName>
        <fullName evidence="1">PanK-III</fullName>
    </alternativeName>
    <alternativeName>
        <fullName evidence="1">Pantothenic acid kinase</fullName>
    </alternativeName>
</protein>
<feature type="chain" id="PRO_0000270912" description="Type III pantothenate kinase">
    <location>
        <begin position="1"/>
        <end position="242"/>
    </location>
</feature>
<feature type="active site" description="Proton acceptor" evidence="1">
    <location>
        <position position="100"/>
    </location>
</feature>
<feature type="binding site" evidence="1">
    <location>
        <begin position="7"/>
        <end position="14"/>
    </location>
    <ligand>
        <name>ATP</name>
        <dbReference type="ChEBI" id="CHEBI:30616"/>
    </ligand>
</feature>
<feature type="binding site" evidence="1">
    <location>
        <position position="91"/>
    </location>
    <ligand>
        <name>substrate</name>
    </ligand>
</feature>
<feature type="binding site" evidence="1">
    <location>
        <begin position="98"/>
        <end position="101"/>
    </location>
    <ligand>
        <name>substrate</name>
    </ligand>
</feature>
<feature type="binding site" evidence="1">
    <location>
        <position position="121"/>
    </location>
    <ligand>
        <name>ATP</name>
        <dbReference type="ChEBI" id="CHEBI:30616"/>
    </ligand>
</feature>
<feature type="binding site" evidence="1">
    <location>
        <position position="171"/>
    </location>
    <ligand>
        <name>substrate</name>
    </ligand>
</feature>
<reference key="1">
    <citation type="journal article" date="2005" name="Nucleic Acids Res.">
        <title>The genome sequence of Xanthomonas oryzae pathovar oryzae KACC10331, the bacterial blight pathogen of rice.</title>
        <authorList>
            <person name="Lee B.-M."/>
            <person name="Park Y.-J."/>
            <person name="Park D.-S."/>
            <person name="Kang H.-W."/>
            <person name="Kim J.-G."/>
            <person name="Song E.-S."/>
            <person name="Park I.-C."/>
            <person name="Yoon U.-H."/>
            <person name="Hahn J.-H."/>
            <person name="Koo B.-S."/>
            <person name="Lee G.-B."/>
            <person name="Kim H."/>
            <person name="Park H.-S."/>
            <person name="Yoon K.-O."/>
            <person name="Kim J.-H."/>
            <person name="Jung C.-H."/>
            <person name="Koh N.-H."/>
            <person name="Seo J.-S."/>
            <person name="Go S.-J."/>
        </authorList>
    </citation>
    <scope>NUCLEOTIDE SEQUENCE [LARGE SCALE GENOMIC DNA]</scope>
    <source>
        <strain>KACC10331 / KXO85</strain>
    </source>
</reference>
<proteinExistence type="inferred from homology"/>
<keyword id="KW-0067">ATP-binding</keyword>
<keyword id="KW-0173">Coenzyme A biosynthesis</keyword>
<keyword id="KW-0963">Cytoplasm</keyword>
<keyword id="KW-0418">Kinase</keyword>
<keyword id="KW-0547">Nucleotide-binding</keyword>
<keyword id="KW-0630">Potassium</keyword>
<keyword id="KW-1185">Reference proteome</keyword>
<keyword id="KW-0808">Transferase</keyword>
<organism>
    <name type="scientific">Xanthomonas oryzae pv. oryzae (strain KACC10331 / KXO85)</name>
    <dbReference type="NCBI Taxonomy" id="291331"/>
    <lineage>
        <taxon>Bacteria</taxon>
        <taxon>Pseudomonadati</taxon>
        <taxon>Pseudomonadota</taxon>
        <taxon>Gammaproteobacteria</taxon>
        <taxon>Lysobacterales</taxon>
        <taxon>Lysobacteraceae</taxon>
        <taxon>Xanthomonas</taxon>
    </lineage>
</organism>
<dbReference type="EC" id="2.7.1.33" evidence="1"/>
<dbReference type="EMBL" id="AE013598">
    <property type="protein sequence ID" value="AAW73683.1"/>
    <property type="molecule type" value="Genomic_DNA"/>
</dbReference>
<dbReference type="SMR" id="Q5H5T7"/>
<dbReference type="STRING" id="291331.XOO0429"/>
<dbReference type="KEGG" id="xoo:XOO0429"/>
<dbReference type="HOGENOM" id="CLU_066627_0_0_6"/>
<dbReference type="UniPathway" id="UPA00241">
    <property type="reaction ID" value="UER00352"/>
</dbReference>
<dbReference type="Proteomes" id="UP000006735">
    <property type="component" value="Chromosome"/>
</dbReference>
<dbReference type="GO" id="GO:0005737">
    <property type="term" value="C:cytoplasm"/>
    <property type="evidence" value="ECO:0007669"/>
    <property type="project" value="UniProtKB-SubCell"/>
</dbReference>
<dbReference type="GO" id="GO:0005524">
    <property type="term" value="F:ATP binding"/>
    <property type="evidence" value="ECO:0007669"/>
    <property type="project" value="UniProtKB-UniRule"/>
</dbReference>
<dbReference type="GO" id="GO:0004594">
    <property type="term" value="F:pantothenate kinase activity"/>
    <property type="evidence" value="ECO:0007669"/>
    <property type="project" value="UniProtKB-UniRule"/>
</dbReference>
<dbReference type="GO" id="GO:0015937">
    <property type="term" value="P:coenzyme A biosynthetic process"/>
    <property type="evidence" value="ECO:0007669"/>
    <property type="project" value="UniProtKB-UniRule"/>
</dbReference>
<dbReference type="CDD" id="cd24015">
    <property type="entry name" value="ASKHA_NBD_PanK-III"/>
    <property type="match status" value="1"/>
</dbReference>
<dbReference type="Gene3D" id="3.30.420.40">
    <property type="match status" value="2"/>
</dbReference>
<dbReference type="HAMAP" id="MF_01274">
    <property type="entry name" value="Pantothen_kinase_3"/>
    <property type="match status" value="1"/>
</dbReference>
<dbReference type="InterPro" id="IPR043129">
    <property type="entry name" value="ATPase_NBD"/>
</dbReference>
<dbReference type="InterPro" id="IPR004619">
    <property type="entry name" value="Type_III_PanK"/>
</dbReference>
<dbReference type="NCBIfam" id="TIGR00671">
    <property type="entry name" value="baf"/>
    <property type="match status" value="1"/>
</dbReference>
<dbReference type="NCBIfam" id="NF009864">
    <property type="entry name" value="PRK13327.1"/>
    <property type="match status" value="1"/>
</dbReference>
<dbReference type="PANTHER" id="PTHR34265">
    <property type="entry name" value="TYPE III PANTOTHENATE KINASE"/>
    <property type="match status" value="1"/>
</dbReference>
<dbReference type="PANTHER" id="PTHR34265:SF1">
    <property type="entry name" value="TYPE III PANTOTHENATE KINASE"/>
    <property type="match status" value="1"/>
</dbReference>
<dbReference type="Pfam" id="PF03309">
    <property type="entry name" value="Pan_kinase"/>
    <property type="match status" value="1"/>
</dbReference>
<dbReference type="SUPFAM" id="SSF53067">
    <property type="entry name" value="Actin-like ATPase domain"/>
    <property type="match status" value="2"/>
</dbReference>
<accession>Q5H5T7</accession>
<gene>
    <name evidence="1" type="primary">coaX</name>
    <name type="ordered locus">XOO0429</name>
</gene>
<evidence type="ECO:0000255" key="1">
    <source>
        <dbReference type="HAMAP-Rule" id="MF_01274"/>
    </source>
</evidence>